<organism>
    <name type="scientific">Protochlamydia amoebophila (strain UWE25)</name>
    <dbReference type="NCBI Taxonomy" id="264201"/>
    <lineage>
        <taxon>Bacteria</taxon>
        <taxon>Pseudomonadati</taxon>
        <taxon>Chlamydiota</taxon>
        <taxon>Chlamydiia</taxon>
        <taxon>Parachlamydiales</taxon>
        <taxon>Parachlamydiaceae</taxon>
        <taxon>Candidatus Protochlamydia</taxon>
    </lineage>
</organism>
<protein>
    <recommendedName>
        <fullName evidence="1">tRNA uridine(34) hydroxylase</fullName>
        <ecNumber evidence="1">1.14.-.-</ecNumber>
    </recommendedName>
    <alternativeName>
        <fullName evidence="1">tRNA hydroxylation protein O</fullName>
    </alternativeName>
</protein>
<keyword id="KW-0560">Oxidoreductase</keyword>
<keyword id="KW-1185">Reference proteome</keyword>
<keyword id="KW-0819">tRNA processing</keyword>
<sequence>MAQEPSFFVLAYYHFTAIADPHQEVKAHKEFFKDRNITSRIYLSEQGINGQMSGKREDAEAYMKWLHANPLFETMPFKIHSHHENVFPRQTVKYRKQLVALDEDVDMNQTGQHISPLEWKELLEKEKRPLLLDVRNEYEWQVGRFDGAECPPCDTFREFKEYAENLKTQVNPEQTPIMMYCTGGIRCELYSSLLKKEGFKEVYQLEGGIINYGLKQGSEHWLGKLFVFDDRLTIPISQEPAPVIGSCHHCQTSNETYYNCANMDCNHLYLCCQTCVEKFLGCCCTDCQNAPRVRPYHHQDVHKPFRKRHHYFKDDLTSKQ</sequence>
<name>TRHO_PARUW</name>
<evidence type="ECO:0000255" key="1">
    <source>
        <dbReference type="HAMAP-Rule" id="MF_00469"/>
    </source>
</evidence>
<dbReference type="EC" id="1.14.-.-" evidence="1"/>
<dbReference type="EMBL" id="BX908798">
    <property type="protein sequence ID" value="CAF23102.1"/>
    <property type="molecule type" value="Genomic_DNA"/>
</dbReference>
<dbReference type="RefSeq" id="WP_011174928.1">
    <property type="nucleotide sequence ID" value="NC_005861.2"/>
</dbReference>
<dbReference type="SMR" id="Q6ME97"/>
<dbReference type="STRING" id="264201.pc0378"/>
<dbReference type="KEGG" id="pcu:PC_RS01855"/>
<dbReference type="eggNOG" id="COG1054">
    <property type="taxonomic scope" value="Bacteria"/>
</dbReference>
<dbReference type="HOGENOM" id="CLU_038878_1_0_0"/>
<dbReference type="OrthoDB" id="9778326at2"/>
<dbReference type="Proteomes" id="UP000000529">
    <property type="component" value="Chromosome"/>
</dbReference>
<dbReference type="GO" id="GO:0016705">
    <property type="term" value="F:oxidoreductase activity, acting on paired donors, with incorporation or reduction of molecular oxygen"/>
    <property type="evidence" value="ECO:0007669"/>
    <property type="project" value="UniProtKB-UniRule"/>
</dbReference>
<dbReference type="GO" id="GO:0006400">
    <property type="term" value="P:tRNA modification"/>
    <property type="evidence" value="ECO:0007669"/>
    <property type="project" value="UniProtKB-UniRule"/>
</dbReference>
<dbReference type="CDD" id="cd01518">
    <property type="entry name" value="RHOD_YceA"/>
    <property type="match status" value="1"/>
</dbReference>
<dbReference type="Gene3D" id="3.30.70.100">
    <property type="match status" value="1"/>
</dbReference>
<dbReference type="Gene3D" id="3.40.250.10">
    <property type="entry name" value="Rhodanese-like domain"/>
    <property type="match status" value="1"/>
</dbReference>
<dbReference type="HAMAP" id="MF_00469">
    <property type="entry name" value="TrhO"/>
    <property type="match status" value="1"/>
</dbReference>
<dbReference type="InterPro" id="IPR001763">
    <property type="entry name" value="Rhodanese-like_dom"/>
</dbReference>
<dbReference type="InterPro" id="IPR036873">
    <property type="entry name" value="Rhodanese-like_dom_sf"/>
</dbReference>
<dbReference type="InterPro" id="IPR022111">
    <property type="entry name" value="Rhodanese_C"/>
</dbReference>
<dbReference type="InterPro" id="IPR020936">
    <property type="entry name" value="TrhO"/>
</dbReference>
<dbReference type="InterPro" id="IPR040503">
    <property type="entry name" value="TRHO_N"/>
</dbReference>
<dbReference type="NCBIfam" id="NF001134">
    <property type="entry name" value="PRK00142.1-2"/>
    <property type="match status" value="1"/>
</dbReference>
<dbReference type="NCBIfam" id="NF001135">
    <property type="entry name" value="PRK00142.1-3"/>
    <property type="match status" value="1"/>
</dbReference>
<dbReference type="PANTHER" id="PTHR43268:SF3">
    <property type="entry name" value="RHODANESE-LIKE DOMAIN-CONTAINING PROTEIN 7-RELATED"/>
    <property type="match status" value="1"/>
</dbReference>
<dbReference type="PANTHER" id="PTHR43268">
    <property type="entry name" value="THIOSULFATE SULFURTRANSFERASE/RHODANESE-LIKE DOMAIN-CONTAINING PROTEIN 2"/>
    <property type="match status" value="1"/>
</dbReference>
<dbReference type="Pfam" id="PF00581">
    <property type="entry name" value="Rhodanese"/>
    <property type="match status" value="1"/>
</dbReference>
<dbReference type="Pfam" id="PF12368">
    <property type="entry name" value="Rhodanese_C"/>
    <property type="match status" value="1"/>
</dbReference>
<dbReference type="Pfam" id="PF17773">
    <property type="entry name" value="UPF0176_N"/>
    <property type="match status" value="1"/>
</dbReference>
<dbReference type="SMART" id="SM00450">
    <property type="entry name" value="RHOD"/>
    <property type="match status" value="1"/>
</dbReference>
<dbReference type="SUPFAM" id="SSF52821">
    <property type="entry name" value="Rhodanese/Cell cycle control phosphatase"/>
    <property type="match status" value="1"/>
</dbReference>
<dbReference type="PROSITE" id="PS50206">
    <property type="entry name" value="RHODANESE_3"/>
    <property type="match status" value="1"/>
</dbReference>
<feature type="chain" id="PRO_0000161491" description="tRNA uridine(34) hydroxylase">
    <location>
        <begin position="1"/>
        <end position="320"/>
    </location>
</feature>
<feature type="domain" description="Rhodanese" evidence="1">
    <location>
        <begin position="125"/>
        <end position="221"/>
    </location>
</feature>
<feature type="active site" description="Cysteine persulfide intermediate" evidence="1">
    <location>
        <position position="181"/>
    </location>
</feature>
<reference key="1">
    <citation type="journal article" date="2004" name="Science">
        <title>Illuminating the evolutionary history of chlamydiae.</title>
        <authorList>
            <person name="Horn M."/>
            <person name="Collingro A."/>
            <person name="Schmitz-Esser S."/>
            <person name="Beier C.L."/>
            <person name="Purkhold U."/>
            <person name="Fartmann B."/>
            <person name="Brandt P."/>
            <person name="Nyakatura G.J."/>
            <person name="Droege M."/>
            <person name="Frishman D."/>
            <person name="Rattei T."/>
            <person name="Mewes H.-W."/>
            <person name="Wagner M."/>
        </authorList>
    </citation>
    <scope>NUCLEOTIDE SEQUENCE [LARGE SCALE GENOMIC DNA]</scope>
    <source>
        <strain>UWE25</strain>
    </source>
</reference>
<accession>Q6ME97</accession>
<gene>
    <name evidence="1" type="primary">trhO</name>
    <name type="ordered locus">pc0378</name>
</gene>
<proteinExistence type="inferred from homology"/>
<comment type="function">
    <text evidence="1">Catalyzes oxygen-dependent 5-hydroxyuridine (ho5U) modification at position 34 in tRNAs.</text>
</comment>
<comment type="catalytic activity">
    <reaction evidence="1">
        <text>uridine(34) in tRNA + AH2 + O2 = 5-hydroxyuridine(34) in tRNA + A + H2O</text>
        <dbReference type="Rhea" id="RHEA:64224"/>
        <dbReference type="Rhea" id="RHEA-COMP:11727"/>
        <dbReference type="Rhea" id="RHEA-COMP:13381"/>
        <dbReference type="ChEBI" id="CHEBI:13193"/>
        <dbReference type="ChEBI" id="CHEBI:15377"/>
        <dbReference type="ChEBI" id="CHEBI:15379"/>
        <dbReference type="ChEBI" id="CHEBI:17499"/>
        <dbReference type="ChEBI" id="CHEBI:65315"/>
        <dbReference type="ChEBI" id="CHEBI:136877"/>
    </reaction>
</comment>
<comment type="similarity">
    <text evidence="1">Belongs to the TrhO family.</text>
</comment>